<accession>Q8ZD40</accession>
<accession>Q0WDD9</accession>
<accession>Q74SZ0</accession>
<accession>Q8D0U6</accession>
<dbReference type="EC" id="3.4.24.-" evidence="1"/>
<dbReference type="EMBL" id="AL590842">
    <property type="protein sequence ID" value="CAL21371.1"/>
    <property type="molecule type" value="Genomic_DNA"/>
</dbReference>
<dbReference type="EMBL" id="AE009952">
    <property type="protein sequence ID" value="AAM85155.1"/>
    <property type="status" value="ALT_INIT"/>
    <property type="molecule type" value="Genomic_DNA"/>
</dbReference>
<dbReference type="EMBL" id="AE017042">
    <property type="protein sequence ID" value="AAS62616.1"/>
    <property type="status" value="ALT_INIT"/>
    <property type="molecule type" value="Genomic_DNA"/>
</dbReference>
<dbReference type="PIR" id="AH0335">
    <property type="entry name" value="AH0335"/>
</dbReference>
<dbReference type="RefSeq" id="WP_002209712.1">
    <property type="nucleotide sequence ID" value="NZ_VEZU01000028.1"/>
</dbReference>
<dbReference type="RefSeq" id="YP_002347699.1">
    <property type="nucleotide sequence ID" value="NC_003143.1"/>
</dbReference>
<dbReference type="SMR" id="Q8ZD40"/>
<dbReference type="STRING" id="214092.YPO2752"/>
<dbReference type="MEROPS" id="M74.001"/>
<dbReference type="PaxDb" id="214092-YPO2752"/>
<dbReference type="DNASU" id="1146533"/>
<dbReference type="EnsemblBacteria" id="AAS62616">
    <property type="protein sequence ID" value="AAS62616"/>
    <property type="gene ID" value="YP_2411"/>
</dbReference>
<dbReference type="GeneID" id="57975937"/>
<dbReference type="KEGG" id="ype:YPO2752"/>
<dbReference type="KEGG" id="ypk:y1586"/>
<dbReference type="KEGG" id="ypm:YP_2411"/>
<dbReference type="PATRIC" id="fig|214092.21.peg.3196"/>
<dbReference type="eggNOG" id="COG3770">
    <property type="taxonomic scope" value="Bacteria"/>
</dbReference>
<dbReference type="HOGENOM" id="CLU_052496_0_0_6"/>
<dbReference type="OrthoDB" id="1467367at2"/>
<dbReference type="Proteomes" id="UP000000815">
    <property type="component" value="Chromosome"/>
</dbReference>
<dbReference type="Proteomes" id="UP000001019">
    <property type="component" value="Chromosome"/>
</dbReference>
<dbReference type="Proteomes" id="UP000002490">
    <property type="component" value="Chromosome"/>
</dbReference>
<dbReference type="GO" id="GO:0030288">
    <property type="term" value="C:outer membrane-bounded periplasmic space"/>
    <property type="evidence" value="ECO:0007669"/>
    <property type="project" value="InterPro"/>
</dbReference>
<dbReference type="GO" id="GO:0046872">
    <property type="term" value="F:metal ion binding"/>
    <property type="evidence" value="ECO:0007669"/>
    <property type="project" value="UniProtKB-KW"/>
</dbReference>
<dbReference type="GO" id="GO:0004222">
    <property type="term" value="F:metalloendopeptidase activity"/>
    <property type="evidence" value="ECO:0007669"/>
    <property type="project" value="UniProtKB-UniRule"/>
</dbReference>
<dbReference type="GO" id="GO:0004252">
    <property type="term" value="F:serine-type endopeptidase activity"/>
    <property type="evidence" value="ECO:0007669"/>
    <property type="project" value="InterPro"/>
</dbReference>
<dbReference type="GO" id="GO:0000270">
    <property type="term" value="P:peptidoglycan metabolic process"/>
    <property type="evidence" value="ECO:0007669"/>
    <property type="project" value="UniProtKB-UniRule"/>
</dbReference>
<dbReference type="GO" id="GO:0006508">
    <property type="term" value="P:proteolysis"/>
    <property type="evidence" value="ECO:0007669"/>
    <property type="project" value="UniProtKB-KW"/>
</dbReference>
<dbReference type="Gene3D" id="3.30.1380.10">
    <property type="match status" value="1"/>
</dbReference>
<dbReference type="HAMAP" id="MF_01623">
    <property type="entry name" value="MepA"/>
    <property type="match status" value="1"/>
</dbReference>
<dbReference type="InterPro" id="IPR009045">
    <property type="entry name" value="Hedgehog_sig/DD-Pept_Zn-bd_sf"/>
</dbReference>
<dbReference type="InterPro" id="IPR005073">
    <property type="entry name" value="Peptidase_M74"/>
</dbReference>
<dbReference type="NCBIfam" id="NF006947">
    <property type="entry name" value="PRK09429.1"/>
    <property type="match status" value="1"/>
</dbReference>
<dbReference type="Pfam" id="PF03411">
    <property type="entry name" value="Peptidase_M74"/>
    <property type="match status" value="1"/>
</dbReference>
<dbReference type="PIRSF" id="PIRSF018455">
    <property type="entry name" value="MepA"/>
    <property type="match status" value="1"/>
</dbReference>
<dbReference type="SUPFAM" id="SSF55166">
    <property type="entry name" value="Hedgehog/DD-peptidase"/>
    <property type="match status" value="1"/>
</dbReference>
<comment type="function">
    <text evidence="1">Murein endopeptidase that cleaves the D-alanyl-meso-2,6-diamino-pimelyl amide bond that connects peptidoglycan strands. Likely plays a role in the removal of murein from the sacculus.</text>
</comment>
<comment type="cofactor">
    <cofactor evidence="1">
        <name>Zn(2+)</name>
        <dbReference type="ChEBI" id="CHEBI:29105"/>
    </cofactor>
    <text evidence="1">Binds 2 Zn(2+) ions per subunit. Zn(2+) ion 1 is bound in the active site. Zn(2+) ion 2 is bound at the dimer interface by residues from both subunits.</text>
</comment>
<comment type="subunit">
    <text evidence="1">Dimer.</text>
</comment>
<comment type="subcellular location">
    <subcellularLocation>
        <location evidence="1">Periplasm</location>
    </subcellularLocation>
</comment>
<comment type="similarity">
    <text evidence="1">Belongs to the peptidase M74 family.</text>
</comment>
<comment type="sequence caution" evidence="3">
    <conflict type="erroneous initiation">
        <sequence resource="EMBL-CDS" id="AAM85155"/>
    </conflict>
</comment>
<comment type="sequence caution" evidence="3">
    <conflict type="erroneous initiation">
        <sequence resource="EMBL-CDS" id="AAS62616"/>
    </conflict>
</comment>
<reference key="1">
    <citation type="journal article" date="2001" name="Nature">
        <title>Genome sequence of Yersinia pestis, the causative agent of plague.</title>
        <authorList>
            <person name="Parkhill J."/>
            <person name="Wren B.W."/>
            <person name="Thomson N.R."/>
            <person name="Titball R.W."/>
            <person name="Holden M.T.G."/>
            <person name="Prentice M.B."/>
            <person name="Sebaihia M."/>
            <person name="James K.D."/>
            <person name="Churcher C.M."/>
            <person name="Mungall K.L."/>
            <person name="Baker S."/>
            <person name="Basham D."/>
            <person name="Bentley S.D."/>
            <person name="Brooks K."/>
            <person name="Cerdeno-Tarraga A.-M."/>
            <person name="Chillingworth T."/>
            <person name="Cronin A."/>
            <person name="Davies R.M."/>
            <person name="Davis P."/>
            <person name="Dougan G."/>
            <person name="Feltwell T."/>
            <person name="Hamlin N."/>
            <person name="Holroyd S."/>
            <person name="Jagels K."/>
            <person name="Karlyshev A.V."/>
            <person name="Leather S."/>
            <person name="Moule S."/>
            <person name="Oyston P.C.F."/>
            <person name="Quail M.A."/>
            <person name="Rutherford K.M."/>
            <person name="Simmonds M."/>
            <person name="Skelton J."/>
            <person name="Stevens K."/>
            <person name="Whitehead S."/>
            <person name="Barrell B.G."/>
        </authorList>
    </citation>
    <scope>NUCLEOTIDE SEQUENCE [LARGE SCALE GENOMIC DNA]</scope>
    <source>
        <strain>CO-92 / Biovar Orientalis</strain>
    </source>
</reference>
<reference key="2">
    <citation type="journal article" date="2002" name="J. Bacteriol.">
        <title>Genome sequence of Yersinia pestis KIM.</title>
        <authorList>
            <person name="Deng W."/>
            <person name="Burland V."/>
            <person name="Plunkett G. III"/>
            <person name="Boutin A."/>
            <person name="Mayhew G.F."/>
            <person name="Liss P."/>
            <person name="Perna N.T."/>
            <person name="Rose D.J."/>
            <person name="Mau B."/>
            <person name="Zhou S."/>
            <person name="Schwartz D.C."/>
            <person name="Fetherston J.D."/>
            <person name="Lindler L.E."/>
            <person name="Brubaker R.R."/>
            <person name="Plano G.V."/>
            <person name="Straley S.C."/>
            <person name="McDonough K.A."/>
            <person name="Nilles M.L."/>
            <person name="Matson J.S."/>
            <person name="Blattner F.R."/>
            <person name="Perry R.D."/>
        </authorList>
    </citation>
    <scope>NUCLEOTIDE SEQUENCE [LARGE SCALE GENOMIC DNA]</scope>
    <source>
        <strain>KIM10+ / Biovar Mediaevalis</strain>
    </source>
</reference>
<reference key="3">
    <citation type="journal article" date="2004" name="DNA Res.">
        <title>Complete genome sequence of Yersinia pestis strain 91001, an isolate avirulent to humans.</title>
        <authorList>
            <person name="Song Y."/>
            <person name="Tong Z."/>
            <person name="Wang J."/>
            <person name="Wang L."/>
            <person name="Guo Z."/>
            <person name="Han Y."/>
            <person name="Zhang J."/>
            <person name="Pei D."/>
            <person name="Zhou D."/>
            <person name="Qin H."/>
            <person name="Pang X."/>
            <person name="Han Y."/>
            <person name="Zhai J."/>
            <person name="Li M."/>
            <person name="Cui B."/>
            <person name="Qi Z."/>
            <person name="Jin L."/>
            <person name="Dai R."/>
            <person name="Chen F."/>
            <person name="Li S."/>
            <person name="Ye C."/>
            <person name="Du Z."/>
            <person name="Lin W."/>
            <person name="Wang J."/>
            <person name="Yu J."/>
            <person name="Yang H."/>
            <person name="Wang J."/>
            <person name="Huang P."/>
            <person name="Yang R."/>
        </authorList>
    </citation>
    <scope>NUCLEOTIDE SEQUENCE [LARGE SCALE GENOMIC DNA]</scope>
    <source>
        <strain>91001 / Biovar Mediaevalis</strain>
    </source>
</reference>
<protein>
    <recommendedName>
        <fullName evidence="1">Penicillin-insensitive murein endopeptidase</fullName>
        <ecNumber evidence="1">3.4.24.-</ecNumber>
    </recommendedName>
    <alternativeName>
        <fullName evidence="1">D-alanyl-D-alanine-endopeptidase</fullName>
        <shortName evidence="1">DD-endopeptidase</shortName>
    </alternativeName>
</protein>
<sequence>MKNWIVGMVALVTMVPVMAATPWQKITHPVAGSPQSIGGFANGCVIGAQPLPLESADYQVMRSDQRRYFGHPDLLNFIHRLSAQTHQQQLGTVLIGDMAMPAGGRFSSGHASHQSGLDVDIWLQLPKQRWSQQQLLKPQPIDLVAVDGKRVIPALWQPQIESLIKLAAKDNDVTRIFVNPAIKKQLCLDAGADRQWLHKVRPWFAHRAHMHVRLRCPANSLECVDQDTPPPGDGCGAELESWFQPPPPSAKPGKTLPPPLPPSCQALLDNHFATE</sequence>
<proteinExistence type="inferred from homology"/>
<evidence type="ECO:0000255" key="1">
    <source>
        <dbReference type="HAMAP-Rule" id="MF_01623"/>
    </source>
</evidence>
<evidence type="ECO:0000256" key="2">
    <source>
        <dbReference type="SAM" id="MobiDB-lite"/>
    </source>
</evidence>
<evidence type="ECO:0000305" key="3"/>
<name>MEPA_YERPE</name>
<organism>
    <name type="scientific">Yersinia pestis</name>
    <dbReference type="NCBI Taxonomy" id="632"/>
    <lineage>
        <taxon>Bacteria</taxon>
        <taxon>Pseudomonadati</taxon>
        <taxon>Pseudomonadota</taxon>
        <taxon>Gammaproteobacteria</taxon>
        <taxon>Enterobacterales</taxon>
        <taxon>Yersiniaceae</taxon>
        <taxon>Yersinia</taxon>
    </lineage>
</organism>
<gene>
    <name evidence="1" type="primary">mepA</name>
    <name type="ordered locus">YPO2752</name>
    <name type="ordered locus">y1586</name>
    <name type="ordered locus">YP_2411</name>
</gene>
<keyword id="KW-1015">Disulfide bond</keyword>
<keyword id="KW-0378">Hydrolase</keyword>
<keyword id="KW-0479">Metal-binding</keyword>
<keyword id="KW-0482">Metalloprotease</keyword>
<keyword id="KW-0574">Periplasm</keyword>
<keyword id="KW-0645">Protease</keyword>
<keyword id="KW-1185">Reference proteome</keyword>
<keyword id="KW-0732">Signal</keyword>
<keyword id="KW-0862">Zinc</keyword>
<feature type="signal peptide" evidence="1">
    <location>
        <begin position="1"/>
        <end position="19"/>
    </location>
</feature>
<feature type="chain" id="PRO_0000044584" description="Penicillin-insensitive murein endopeptidase">
    <location>
        <begin position="20"/>
        <end position="275"/>
    </location>
</feature>
<feature type="region of interest" description="Disordered" evidence="2">
    <location>
        <begin position="227"/>
        <end position="262"/>
    </location>
</feature>
<feature type="compositionally biased region" description="Pro residues" evidence="2">
    <location>
        <begin position="244"/>
        <end position="262"/>
    </location>
</feature>
<feature type="binding site" evidence="1">
    <location>
        <position position="110"/>
    </location>
    <ligand>
        <name>Zn(2+)</name>
        <dbReference type="ChEBI" id="CHEBI:29105"/>
        <label>1</label>
    </ligand>
</feature>
<feature type="binding site" evidence="1">
    <location>
        <position position="113"/>
    </location>
    <ligand>
        <name>Zn(2+)</name>
        <dbReference type="ChEBI" id="CHEBI:29105"/>
        <label>1</label>
    </ligand>
</feature>
<feature type="binding site" evidence="1">
    <location>
        <position position="120"/>
    </location>
    <ligand>
        <name>Zn(2+)</name>
        <dbReference type="ChEBI" id="CHEBI:29105"/>
        <label>1</label>
    </ligand>
</feature>
<feature type="binding site" evidence="1">
    <location>
        <position position="147"/>
    </location>
    <ligand>
        <name>Zn(2+)</name>
        <dbReference type="ChEBI" id="CHEBI:29105"/>
        <label>2</label>
    </ligand>
</feature>
<feature type="binding site" evidence="1">
    <location>
        <position position="211"/>
    </location>
    <ligand>
        <name>Zn(2+)</name>
        <dbReference type="ChEBI" id="CHEBI:29105"/>
        <label>1</label>
    </ligand>
</feature>
<feature type="disulfide bond" evidence="1">
    <location>
        <begin position="44"/>
        <end position="264"/>
    </location>
</feature>
<feature type="disulfide bond" evidence="1">
    <location>
        <begin position="187"/>
        <end position="235"/>
    </location>
</feature>
<feature type="disulfide bond" evidence="1">
    <location>
        <begin position="216"/>
        <end position="223"/>
    </location>
</feature>
<feature type="sequence conflict" description="In Ref. 2 and 3." evidence="3" ref="2 3">
    <original>T</original>
    <variation>A</variation>
    <location>
        <position position="85"/>
    </location>
</feature>